<proteinExistence type="inferred from homology"/>
<accession>J4KNP2</accession>
<reference key="1">
    <citation type="journal article" date="2012" name="Sci. Rep.">
        <title>Genomic perspectives on the evolution of fungal entomopathogenicity in Beauveria bassiana.</title>
        <authorList>
            <person name="Xiao G."/>
            <person name="Ying S.-H."/>
            <person name="Zheng P."/>
            <person name="Wang Z.-L."/>
            <person name="Zhang S."/>
            <person name="Xie X.-Q."/>
            <person name="Shang Y."/>
            <person name="St Leger R.J."/>
            <person name="Zhao G.-P."/>
            <person name="Wang C."/>
            <person name="Feng M.-G."/>
        </authorList>
    </citation>
    <scope>NUCLEOTIDE SEQUENCE [LARGE SCALE GENOMIC DNA]</scope>
    <source>
        <strain>ARSEF 2860</strain>
    </source>
</reference>
<reference key="2">
    <citation type="journal article" date="2024" name="J. Agric. Food Chem.">
        <title>Unlocking the siderophore biosynthesis pathway and its biological functions in the fungal insect pathogen Beauveria bassiana.</title>
        <authorList>
            <person name="Sun T.F."/>
            <person name="Ge Z.W."/>
            <person name="Xu H.R."/>
            <person name="Zhang H."/>
            <person name="Huang S.S."/>
            <person name="Feng M.G."/>
            <person name="Ying S.H."/>
        </authorList>
    </citation>
    <scope>FUNCTION</scope>
    <scope>DISRUPTION PHENOTYPE</scope>
    <scope>PATHWAY</scope>
</reference>
<keyword id="KW-0436">Ligase</keyword>
<keyword id="KW-0596">Phosphopantetheine</keyword>
<keyword id="KW-0597">Phosphoprotein</keyword>
<keyword id="KW-1185">Reference proteome</keyword>
<keyword id="KW-0677">Repeat</keyword>
<keyword id="KW-0843">Virulence</keyword>
<protein>
    <recommendedName>
        <fullName evidence="4">Nonribosomal peptide synthetase SIDC</fullName>
        <shortName evidence="4">NPRS sidC</shortName>
        <ecNumber evidence="6">6.3.2.-</ecNumber>
    </recommendedName>
    <alternativeName>
        <fullName evidence="4">Siderophore biosynthesis cluster protein C</fullName>
    </alternativeName>
    <alternativeName>
        <fullName evidence="4">Siderophore peptide synthetase C</fullName>
    </alternativeName>
</protein>
<organism>
    <name type="scientific">Beauveria bassiana (strain ARSEF 2860)</name>
    <name type="common">White muscardine disease fungus</name>
    <name type="synonym">Tritirachium shiotae</name>
    <dbReference type="NCBI Taxonomy" id="655819"/>
    <lineage>
        <taxon>Eukaryota</taxon>
        <taxon>Fungi</taxon>
        <taxon>Dikarya</taxon>
        <taxon>Ascomycota</taxon>
        <taxon>Pezizomycotina</taxon>
        <taxon>Sordariomycetes</taxon>
        <taxon>Hypocreomycetidae</taxon>
        <taxon>Hypocreales</taxon>
        <taxon>Cordycipitaceae</taxon>
        <taxon>Beauveria</taxon>
    </lineage>
</organism>
<gene>
    <name evidence="4" type="primary">SIDC</name>
    <name type="ORF">BBA_05020</name>
</gene>
<comment type="function">
    <text evidence="3">Nonribosomal peptide synthetase; part of the gene cluster that mediates the biosynthesis of at least 11 siderophores, including beauverichelin A, dimerumic acid (DA), Na-dimethyl coprogen (NADC), eleutherazine B, ferricrocin (FC), fusarinine A, fusarinine C (FsC), metachelin A, mevalonolactone, rhodotorulic acid (RA) and tenellin (PubMed:39109629). This cocktail of siderophores for iron metabolism is essential for virulence, and more specifically for the fungal virulence in penetrating through the host cuticle (PubMed:39109629). Siderophore synthesis is also involved in conidial germination under iron-deficient conditions (PubMed:39109629). SIDC catalyzes the assembly of ferricrocin whereas SIDD catalyzes the assembly of fusarinine C (PubMed:39109629).</text>
</comment>
<comment type="cofactor">
    <cofactor evidence="2">
        <name>pantetheine 4'-phosphate</name>
        <dbReference type="ChEBI" id="CHEBI:47942"/>
    </cofactor>
</comment>
<comment type="pathway">
    <text evidence="3">Siderophore biosynthesis.</text>
</comment>
<comment type="domain">
    <text evidence="6">NRP synthetases are composed of discrete domains (adenylation (A), thiolation (T) or peptidyl carrier protein (PCP) and condensation (C) domains) which when grouped together are referred to as a single module. Each module is responsible for the recognition (via the A domain) and incorporation of a single amino acid into the growing peptide product. Thus, an NRP synthetase is generally composed of one or more modules and can terminate in a thioesterase domain (TE) that releases the newly synthesized peptide from the enzyme. Occasionally, epimerase (E) domains (responsible for L- to D- amino acid conversion) are present within the NRP synthetase. SIDC has the following architecture: A-T-C-A-T-C-T-C-A-T-C-T-C-T-C.</text>
</comment>
<comment type="disruption phenotype">
    <text evidence="3">Leads to increased sensitivity to oxidative stress and iron-starvation, reduced conidial germination as well as reduced virulence (PubMed:39109629). Impairs the production of the 2 siderophores ferricrocin (FC) and rhodotorulic acid (RA), and increases significantly the production of fusarinine C (PubMed:39109629).</text>
</comment>
<comment type="similarity">
    <text evidence="5">Belongs to the NRP synthetase family.</text>
</comment>
<feature type="chain" id="PRO_0000461395" description="Nonribosomal peptide synthetase SIDC">
    <location>
        <begin position="1"/>
        <end position="4814"/>
    </location>
</feature>
<feature type="domain" description="Carrier 1" evidence="2">
    <location>
        <begin position="528"/>
        <end position="601"/>
    </location>
</feature>
<feature type="domain" description="Carrier 2" evidence="2">
    <location>
        <begin position="1589"/>
        <end position="1666"/>
    </location>
</feature>
<feature type="domain" description="Carrier 3" evidence="2">
    <location>
        <begin position="2134"/>
        <end position="2210"/>
    </location>
</feature>
<feature type="domain" description="Carrier 4" evidence="2">
    <location>
        <begin position="3203"/>
        <end position="3280"/>
    </location>
</feature>
<feature type="domain" description="Carrier 5" evidence="2">
    <location>
        <begin position="3747"/>
        <end position="3823"/>
    </location>
</feature>
<feature type="domain" description="Carrier 6" evidence="2">
    <location>
        <begin position="4295"/>
        <end position="4368"/>
    </location>
</feature>
<feature type="region of interest" description="Adenylation 1" evidence="1 6">
    <location>
        <begin position="21"/>
        <end position="453"/>
    </location>
</feature>
<feature type="region of interest" description="Condensation 1" evidence="1 6">
    <location>
        <begin position="637"/>
        <end position="1045"/>
    </location>
</feature>
<feature type="region of interest" description="Adenylation 2" evidence="1 6">
    <location>
        <begin position="1101"/>
        <end position="1488"/>
    </location>
</feature>
<feature type="region of interest" description="Condensation 2" evidence="1 6">
    <location>
        <begin position="1706"/>
        <end position="2210"/>
    </location>
</feature>
<feature type="region of interest" description="Condensation 3" evidence="1 6">
    <location>
        <begin position="2243"/>
        <end position="2649"/>
    </location>
</feature>
<feature type="region of interest" description="Adenylation 3" evidence="1 6">
    <location>
        <begin position="2709"/>
        <end position="3100"/>
    </location>
</feature>
<feature type="region of interest" description="Condensation 4" evidence="1 6">
    <location>
        <begin position="3319"/>
        <end position="3732"/>
    </location>
</feature>
<feature type="region of interest" description="Condensation 5" evidence="1 6">
    <location>
        <begin position="3857"/>
        <end position="4258"/>
    </location>
</feature>
<feature type="region of interest" description="Condensation 6" evidence="1 6">
    <location>
        <begin position="4504"/>
        <end position="4686"/>
    </location>
</feature>
<feature type="modified residue" description="O-(pantetheine 4'-phosphoryl)serine" evidence="2">
    <location>
        <position position="562"/>
    </location>
</feature>
<feature type="modified residue" description="O-(pantetheine 4'-phosphoryl)serine" evidence="2">
    <location>
        <position position="1626"/>
    </location>
</feature>
<feature type="modified residue" description="O-(pantetheine 4'-phosphoryl)serine" evidence="2">
    <location>
        <position position="2171"/>
    </location>
</feature>
<feature type="modified residue" description="O-(pantetheine 4'-phosphoryl)serine" evidence="2">
    <location>
        <position position="3240"/>
    </location>
</feature>
<feature type="modified residue" description="O-(pantetheine 4'-phosphoryl)serine" evidence="2">
    <location>
        <position position="3784"/>
    </location>
</feature>
<feature type="modified residue" description="O-(pantetheine 4'-phosphoryl)serine" evidence="2">
    <location>
        <position position="4329"/>
    </location>
</feature>
<dbReference type="EC" id="6.3.2.-" evidence="6"/>
<dbReference type="EMBL" id="JH725161">
    <property type="protein sequence ID" value="EJP66049.1"/>
    <property type="molecule type" value="Genomic_DNA"/>
</dbReference>
<dbReference type="RefSeq" id="XP_008598339.1">
    <property type="nucleotide sequence ID" value="XM_008600117.1"/>
</dbReference>
<dbReference type="SMR" id="J4KNP2"/>
<dbReference type="STRING" id="655819.J4KNP2"/>
<dbReference type="GeneID" id="19888032"/>
<dbReference type="HOGENOM" id="CLU_000092_2_0_1"/>
<dbReference type="InParanoid" id="J4KNP2"/>
<dbReference type="OrthoDB" id="4123at474943"/>
<dbReference type="Proteomes" id="UP000002762">
    <property type="component" value="Unassembled WGS sequence"/>
</dbReference>
<dbReference type="GO" id="GO:0005737">
    <property type="term" value="C:cytoplasm"/>
    <property type="evidence" value="ECO:0007669"/>
    <property type="project" value="TreeGrafter"/>
</dbReference>
<dbReference type="GO" id="GO:0016874">
    <property type="term" value="F:ligase activity"/>
    <property type="evidence" value="ECO:0007669"/>
    <property type="project" value="UniProtKB-KW"/>
</dbReference>
<dbReference type="GO" id="GO:0031177">
    <property type="term" value="F:phosphopantetheine binding"/>
    <property type="evidence" value="ECO:0007669"/>
    <property type="project" value="InterPro"/>
</dbReference>
<dbReference type="GO" id="GO:0043041">
    <property type="term" value="P:amino acid activation for nonribosomal peptide biosynthetic process"/>
    <property type="evidence" value="ECO:0007669"/>
    <property type="project" value="TreeGrafter"/>
</dbReference>
<dbReference type="GO" id="GO:0044550">
    <property type="term" value="P:secondary metabolite biosynthetic process"/>
    <property type="evidence" value="ECO:0007669"/>
    <property type="project" value="TreeGrafter"/>
</dbReference>
<dbReference type="CDD" id="cd05918">
    <property type="entry name" value="A_NRPS_SidN3_like"/>
    <property type="match status" value="1"/>
</dbReference>
<dbReference type="FunFam" id="3.40.50.980:FF:000001">
    <property type="entry name" value="Non-ribosomal peptide synthetase"/>
    <property type="match status" value="2"/>
</dbReference>
<dbReference type="FunFam" id="3.30.300.30:FF:000015">
    <property type="entry name" value="Nonribosomal peptide synthase SidD"/>
    <property type="match status" value="1"/>
</dbReference>
<dbReference type="FunFam" id="3.30.300.30:FF:000033">
    <property type="entry name" value="Nonribosomal siderophore peptide synthase SidC"/>
    <property type="match status" value="1"/>
</dbReference>
<dbReference type="FunFam" id="3.40.50.12780:FF:000024">
    <property type="entry name" value="Nonribosomal siderophore peptide synthase SidC"/>
    <property type="match status" value="2"/>
</dbReference>
<dbReference type="Gene3D" id="3.30.300.30">
    <property type="match status" value="3"/>
</dbReference>
<dbReference type="Gene3D" id="1.10.1200.10">
    <property type="entry name" value="ACP-like"/>
    <property type="match status" value="4"/>
</dbReference>
<dbReference type="Gene3D" id="3.30.559.10">
    <property type="entry name" value="Chloramphenicol acetyltransferase-like domain"/>
    <property type="match status" value="7"/>
</dbReference>
<dbReference type="Gene3D" id="3.40.50.12780">
    <property type="entry name" value="N-terminal domain of ligase-like"/>
    <property type="match status" value="3"/>
</dbReference>
<dbReference type="Gene3D" id="3.30.559.30">
    <property type="entry name" value="Nonribosomal peptide synthetase, condensation domain"/>
    <property type="match status" value="6"/>
</dbReference>
<dbReference type="InterPro" id="IPR010071">
    <property type="entry name" value="AA_adenyl_dom"/>
</dbReference>
<dbReference type="InterPro" id="IPR036736">
    <property type="entry name" value="ACP-like_sf"/>
</dbReference>
<dbReference type="InterPro" id="IPR045851">
    <property type="entry name" value="AMP-bd_C_sf"/>
</dbReference>
<dbReference type="InterPro" id="IPR020845">
    <property type="entry name" value="AMP-binding_CS"/>
</dbReference>
<dbReference type="InterPro" id="IPR000873">
    <property type="entry name" value="AMP-dep_synth/lig_dom"/>
</dbReference>
<dbReference type="InterPro" id="IPR042099">
    <property type="entry name" value="ANL_N_sf"/>
</dbReference>
<dbReference type="InterPro" id="IPR023213">
    <property type="entry name" value="CAT-like_dom_sf"/>
</dbReference>
<dbReference type="InterPro" id="IPR001242">
    <property type="entry name" value="Condensatn"/>
</dbReference>
<dbReference type="InterPro" id="IPR020806">
    <property type="entry name" value="PKS_PP-bd"/>
</dbReference>
<dbReference type="InterPro" id="IPR009081">
    <property type="entry name" value="PP-bd_ACP"/>
</dbReference>
<dbReference type="InterPro" id="IPR006162">
    <property type="entry name" value="Ppantetheine_attach_site"/>
</dbReference>
<dbReference type="NCBIfam" id="TIGR01733">
    <property type="entry name" value="AA-adenyl-dom"/>
    <property type="match status" value="3"/>
</dbReference>
<dbReference type="NCBIfam" id="NF003417">
    <property type="entry name" value="PRK04813.1"/>
    <property type="match status" value="3"/>
</dbReference>
<dbReference type="PANTHER" id="PTHR45527:SF1">
    <property type="entry name" value="FATTY ACID SYNTHASE"/>
    <property type="match status" value="1"/>
</dbReference>
<dbReference type="PANTHER" id="PTHR45527">
    <property type="entry name" value="NONRIBOSOMAL PEPTIDE SYNTHETASE"/>
    <property type="match status" value="1"/>
</dbReference>
<dbReference type="Pfam" id="PF00501">
    <property type="entry name" value="AMP-binding"/>
    <property type="match status" value="3"/>
</dbReference>
<dbReference type="Pfam" id="PF00668">
    <property type="entry name" value="Condensation"/>
    <property type="match status" value="6"/>
</dbReference>
<dbReference type="Pfam" id="PF00550">
    <property type="entry name" value="PP-binding"/>
    <property type="match status" value="5"/>
</dbReference>
<dbReference type="SMART" id="SM00823">
    <property type="entry name" value="PKS_PP"/>
    <property type="match status" value="5"/>
</dbReference>
<dbReference type="SMART" id="SM01294">
    <property type="entry name" value="PKS_PP_betabranch"/>
    <property type="match status" value="1"/>
</dbReference>
<dbReference type="SUPFAM" id="SSF56801">
    <property type="entry name" value="Acetyl-CoA synthetase-like"/>
    <property type="match status" value="3"/>
</dbReference>
<dbReference type="SUPFAM" id="SSF47336">
    <property type="entry name" value="ACP-like"/>
    <property type="match status" value="5"/>
</dbReference>
<dbReference type="SUPFAM" id="SSF52777">
    <property type="entry name" value="CoA-dependent acyltransferases"/>
    <property type="match status" value="12"/>
</dbReference>
<dbReference type="PROSITE" id="PS00455">
    <property type="entry name" value="AMP_BINDING"/>
    <property type="match status" value="2"/>
</dbReference>
<dbReference type="PROSITE" id="PS50075">
    <property type="entry name" value="CARRIER"/>
    <property type="match status" value="4"/>
</dbReference>
<dbReference type="PROSITE" id="PS00012">
    <property type="entry name" value="PHOSPHOPANTETHEINE"/>
    <property type="match status" value="3"/>
</dbReference>
<sequence>MHSAAAGLGLSVLNPSPTILPGPTLLHQLVRPACDHIALEHLCKGEITKFSYKSLHDASDALASQIAQSCVSVHGQLIVPVLLQQCPDLYITLLAILKAGGAFCPLNLDAPAERVQFILKDVGAKVVITSPELSARIPRDAGVELLYASDSYEAIVQHHQAVTRQITPHNYAYVMYTSGSTGTPKGVSISHSAATQALLAHDAHIPRFSRFFQFAAPTFDVSVFEIFFPLFRGETLISASRQETLDDLPAVLRQASVDACELTPTVAASLLRKRENAPQLKLLLTIGEMLNPLVVKEFGGTTDRGSILWAMYGPTEATIHCTLQGDFQSNYSTGNIGIPPETVSCFIIKPAADDYDPTSFDLLPAGDVGELAVGGHQLASGYLNDELKTNKAFIESPYGRVYRTGDKAKMNQDGTLECLGRISDGQVKLRGQRIELGEIEHAAMKTSGCHGAAARVIGGILVLFCAVDACVSEVDILQSCSQWLPQFMIPGDVVLSEELPRLPSGKVNAKELQRQFEQSKAQEGQSADLKKSTEPELLQVLQDCFGSQLSLQTELARAGLDSLTAIGLSSDLRDAGYDVRAVSLLKMKTIGHLVSSIKIIDEADGDNEGTRTSVSCLEKLAELKSKELKLEMSYRNVQDIIPCTNLQIAMLSESIRNPGAYWNAVDLELSTTAAAEDICRAIHAIVEQNEILRTGFVQHDSTIYSVIFDAINSDCVRIADEMELVPPKKSNPDLLRPLQIRIKKGAKGNSYNMQVHLHHAIYDGWSLDLFKSDLARAIGSEGLPSRNQFRDMVAFSLSQKREQYDEKARVFWADYLFGWNKPPFPRLIPRAVPCGTIQSKTYRHSLPSSANQAYNGSAQVPFQAALSLVWGGILGLQDVVIGSVTSGRTIPVKGVENIMGPCISSLPLRVNMERMNTIDDLVNSISSSNRHMMEHSTLSQLAVKKSINMYGAEQLYDVLFVYQESLEQRKQTGSIVQEIAHLDRLETKLVLEVQPIQDAVVLQATFHDDYFSSESVEKILSQVAEISSAILENPHSLLESMRSMETDVSTYNMKLEKMDRDSQPDNLAGVVERAATRFGDRTAVSFATQSSATTMEATNITYTDLNRNANCIAHFLLSQKVQSGEVIPIIMNKSIRLYTTILGIIKAGCGYLPLLPSTPNARILEIFNQSGSRLCLADEDSISNIPPSTTVRTILIDEESMEDYPVENPSIDINSSNTAYVIYTSGTTGTPKGVTVSHKNIASNVTYLGVEYPDSAKASSNFLQACSQAFDVSVFEIFFAWHKGMCLCAASNDVLFADIEEAIRQFEITHLSLTPTIASLIDPSNVPSVEFLVTAGEPMTNAVSERWNKYLWQGYGPSETTNICSVKKMSSDDYIEHLGLVFNNTSVAVLQPKGLSTLPIGWAGEFCFGGDQVATGYLNMPRLTAEKFIQHPKYSRLYRSGDFGRMLPDGSLVILGRIDDQVKLRGQRIEAAEINGIVSRVSSATAAVTLVLKQIDSMGEWLVTFYVQDKDAEDFRILEPNASAHHQIFAELHAKLLSYMVPSYLIPVSRIPLTSSGKVDKRAINTTFTQLSKDYLKTVAHNSVKEDDEDWNDTEQAIASLIAASLKISRNDIGRWTPLAILGLDSLSAIQVSRSLTNEFRTTVSISCILQHPTIAQLARKLHSSHESGDVAIVNDFFSQEFQQSVTAVLAEENKEVVEILPCSPLQEAMVSRGKTSYYNKSLLRLHIDPYKMRGYWQHMCERHSILRTCFMATNSSSYPIAQVSLAKWELPWHEFTVTQPSLEDAIRDHLALVPEPLETNTPPLSLALIRYGEIRFLSFICHHALYDGVAMECLWREVESLARGEQLRPSVAQGPFISEIMKLPSTSQTFWKQQFSNFQPSVLFRKPNGKAVQQATHSLTVERSLHKTQHQIKSLGISLLALCQATMARLLAVVSQKSDVCFGNVMNGRTIGLEGIERLVAPCFNTVPIRQDMPDTLSNIDLAKSLLALNTSMLEHQFTPLRQVQKIAATERRSLFDSLLLVQQPLQEMDVNVWTLEEDAGVMDLPLVCEITPCPNLNTLVLDVHYDMSAVPHVAAAGIASLFEHILLQILESPHAVLARRSIPEPLLEQVHLRQPFFFDDSEDQYETEDSDSSWTDEELAVRAVLSELSQTPTQRIDRTTSLFKLGLDSINAVQVAAILRQKDYSISASDIVECQNCSKIARRIFENGYQPKKEIELHDFAAFDVQVRPELDIAGNGYRLLPCTPMQSAMLSAYVSSNGVHYLNEISLEMDKEITAPLVAEKWAQLVAVHAMLRTGFASVRHADSAYAMIQYESVQSERFIHVDNGGFKPRDWKASEANSIQKSWNLPPWRLGVTTKNGAVNVYLIIHHALYDATSLQELLSNFGRLLNSNKTLPVEDVDTGLSAVLHRTAGEQEEASAFWRQLGEQATINRFPLLTPLREANREILIEEMTSTLTSPDLHQMTKSLEISVQTAILASWSRLLAAYTGEEAVIFGVTFSGRSCEATLGTPVPCLTTVPVVAQNLGSNRDLLSQMMRTASDIYQHQYLPLNRIQKEMGYPATALFDTLVAYQKIESEANDRPWVQKQDDAAAEFPVSLEVEPRDDDSICLRITYFSDILPSDQAKLLLRQFDATMEDLLVNPDGHQHDLHNYHPDIFAISPPLEPTMNAPVELLHQFVEVQAKLNPDKIALEHVSGFRGKEPIRDQWTFAQLNSIGNKVANMLSSRTEAGSIIAIHFDKCPEAYFAILGILKSGSAFVALDFSAPSARKQFILQDSRAPCLLTSEDNVIEFEVPCPVIVIDNALLSDYAETPCEVNNTLTPSSTCYCLYTSGTTGTPKGCEITHENTVQCMMAFQDLFHGHWADDSRWLQFAALHFDVSVLEQYWSWSAGITVVSAKKDLILDDLIGFINNANITHIDLTPSLARLTHPETVPGLCRGVFITGGEQLKQEILDAWGSKAVIYNAYGPTEATIGVTTYQRVPQNGRPSNIGRQFRNVGSYVFHKDTEIPVLRGGVGELCISGKLVGKGYLNRPQLTDEKFPTLESFGERIYRTGDLVRILHDGCFEFLGRADDQVKLRGQRLELGEIDHVIRSVKNIHDVTTLVTKHTSSGKDVLVSFIVEEKIPDTPLVVLADNSSISTDARNMCRDKLPSYMVPSYFLKLPYIPLSPNNKAEAKLLKKLFSELSQEDLIKFGSAAVKRDLSKDSAGYQKLISSLAQFCNLDTATIEDSASVFDFGVDSITALSLSAFLVEKGMFAASPALILRNPIVADLAVALSTASSHDTSAEVKRTRQRVQAFEHKYKARVCRDLGAPPSDIEYIYPCSPLQQGMLAKTAVEDGEGAYFNVFKFHLKPGAVVSSVRAALNKLFEQEPILRTTFLHTPDGYVQVARRGISLPWNECSLAEDGRIEEVVESLWHAWVKENSDRVHTPIKATFVTDTDVNMIVLHIFHGLYDGTSFDLMMTRLTNLCNNVEAKAGPSFADALIHGPLRNHDESKQAWIEHLKGWSLSLLALPKEEKSVRPISHTRVLSASKLEALRSIKNVTMQSLLLAAWVSTLQKHSHGNATTGVIISGRSIAMPGVEETIGPLFNTLPFFANFSSAPTWHSLLQRCQDFNATVLEDPHVPLQQLQKWISNGKPLFESLFAYQIEDRRNQRDDLPWIVEDGGLNPDYSLALEVTKRGDDTMQLLLVAKNDLASETVLKNILDVFEDMLASVETDAAIPVQVETALVDALKSEQVKTIKENVEEVWGPAADVLRREVAALANISEAEIAPSTTWLELGLDSIDAVQFSARLKRHHMIISPSAIMKGWSMAYLSSLVMRLTNGDASCELDNLREIKSKLRRYVEATGFDMTEADDILPTTPLQDAMVSGMIESDFTWYFNHEVLKVAPGVDVDKLQAAWSRLFDMTPILRTGFVELVDPQASAVYAQVVYNSSPVISDVTVTSLEELQAIQEQSRAHASQGGAKRNLARVVRAQLGETTFFVLSISHALYDGWSLGLLHQDLKSLYYGESVGRPSPDQFLFKSNASLTPEAQGFWTNYLEKARPTIIPQVEPDSSSVVKAEGFSSTTLSDISRFCREQKISLQSLCQACWAIILARTTRSLDVVFGSILSGRDFDGAEDLLFPTMNTVAVRCILHGSISSFLHYMEDNLGELRSYQMVPLRKATTAAKAAGKDLFNSLFLLQKTPAESSSGSLFQSVEGSSGVDYPVCVEAAASGEVLEWTVACQGQSRDGRYAKELLAELHTTLDYVLRHAEEDVVSFSRAGTRICGSQPIALAEDDDEIPQIDKYTSYEWNATSLAIRKVLSQVSNIPADAIDASSTLYHLGLDSITAIKVSTLLKQRGIFLRPTQLVRSSSIAHMAEQVAALGSFEPPQTNLSWQAWTPPKNADADGILSEAGILKGQVEHVLPALPMQVYMMSIWQNTNGNIFYPEFTYKLSGPHTATDVRNAWARVVEQLPMLRTCLFATGQQDLPFIQVILKPGMSHAGVQPFVRIEIDQTPGSPETLLRLRIHHALYDGVSLPAITDTLLHHLKGDASRDAAPIHQWAHTVTARHDEAHMASRKAFWTQYLDGCSDASRPDNDMTGSRTSLFQEGAFSCASALTDLAARNGISLQSLVLAAYALSLPHTGQDVVLGVYLAGRADDRVPDTLPTLNLVPLRIKARHRDDHVLEMARRVHEDMQKITADDAAGNAQVGLWEVARWTGVKIDRFVNFLTLPAAAAAGKDESNVSLHLAPTSNPVKEDEAAMTTCIHDAAKNAVRDYYPDSVDVEFAVRNGHLDMGVFGPQTRITDEGAHELVRSVVQRLKKTVEACVH</sequence>
<evidence type="ECO:0000255" key="1"/>
<evidence type="ECO:0000255" key="2">
    <source>
        <dbReference type="PROSITE-ProRule" id="PRU00258"/>
    </source>
</evidence>
<evidence type="ECO:0000269" key="3">
    <source>
    </source>
</evidence>
<evidence type="ECO:0000303" key="4">
    <source>
    </source>
</evidence>
<evidence type="ECO:0000305" key="5"/>
<evidence type="ECO:0000305" key="6">
    <source>
    </source>
</evidence>
<name>SIDC_BEAB2</name>